<accession>Q02PS6</accession>
<reference key="1">
    <citation type="journal article" date="2006" name="Genome Biol.">
        <title>Genomic analysis reveals that Pseudomonas aeruginosa virulence is combinatorial.</title>
        <authorList>
            <person name="Lee D.G."/>
            <person name="Urbach J.M."/>
            <person name="Wu G."/>
            <person name="Liberati N.T."/>
            <person name="Feinbaum R.L."/>
            <person name="Miyata S."/>
            <person name="Diggins L.T."/>
            <person name="He J."/>
            <person name="Saucier M."/>
            <person name="Deziel E."/>
            <person name="Friedman L."/>
            <person name="Li L."/>
            <person name="Grills G."/>
            <person name="Montgomery K."/>
            <person name="Kucherlapati R."/>
            <person name="Rahme L.G."/>
            <person name="Ausubel F.M."/>
        </authorList>
    </citation>
    <scope>NUCLEOTIDE SEQUENCE [LARGE SCALE GENOMIC DNA]</scope>
    <source>
        <strain>UCBPP-PA14</strain>
    </source>
</reference>
<sequence length="211" mass="22269">MPAVRIKICGITRVEDALAAAAAGADAIGLVFYAKSPRAVDIHRAREIVRALPPFVTSVGLFVNASRCELGEILDAVPLDLLQFHGDERAEDCEGHRRPYLKALRMKPGDDIVGRAAAYPGAAGILLDTYVEGVPGGTGAAFDWSLVPADLGKPLVLAGGLTPDNVGRAVEQVKPYAVDVSGGVEASKGIKDAARVRAFVDAVRSRRRDET</sequence>
<organism>
    <name type="scientific">Pseudomonas aeruginosa (strain UCBPP-PA14)</name>
    <dbReference type="NCBI Taxonomy" id="208963"/>
    <lineage>
        <taxon>Bacteria</taxon>
        <taxon>Pseudomonadati</taxon>
        <taxon>Pseudomonadota</taxon>
        <taxon>Gammaproteobacteria</taxon>
        <taxon>Pseudomonadales</taxon>
        <taxon>Pseudomonadaceae</taxon>
        <taxon>Pseudomonas</taxon>
    </lineage>
</organism>
<gene>
    <name evidence="1" type="primary">trpF</name>
    <name type="ordered locus">PA14_23850</name>
</gene>
<keyword id="KW-0028">Amino-acid biosynthesis</keyword>
<keyword id="KW-0057">Aromatic amino acid biosynthesis</keyword>
<keyword id="KW-0413">Isomerase</keyword>
<keyword id="KW-0822">Tryptophan biosynthesis</keyword>
<protein>
    <recommendedName>
        <fullName evidence="1">N-(5'-phosphoribosyl)anthranilate isomerase</fullName>
        <shortName evidence="1">PRAI</shortName>
        <ecNumber evidence="1">5.3.1.24</ecNumber>
    </recommendedName>
</protein>
<proteinExistence type="inferred from homology"/>
<comment type="catalytic activity">
    <reaction evidence="1">
        <text>N-(5-phospho-beta-D-ribosyl)anthranilate = 1-(2-carboxyphenylamino)-1-deoxy-D-ribulose 5-phosphate</text>
        <dbReference type="Rhea" id="RHEA:21540"/>
        <dbReference type="ChEBI" id="CHEBI:18277"/>
        <dbReference type="ChEBI" id="CHEBI:58613"/>
        <dbReference type="EC" id="5.3.1.24"/>
    </reaction>
</comment>
<comment type="pathway">
    <text evidence="1">Amino-acid biosynthesis; L-tryptophan biosynthesis; L-tryptophan from chorismate: step 3/5.</text>
</comment>
<comment type="similarity">
    <text evidence="1">Belongs to the TrpF family.</text>
</comment>
<dbReference type="EC" id="5.3.1.24" evidence="1"/>
<dbReference type="EMBL" id="CP000438">
    <property type="protein sequence ID" value="ABJ12345.1"/>
    <property type="molecule type" value="Genomic_DNA"/>
</dbReference>
<dbReference type="RefSeq" id="WP_003091389.1">
    <property type="nucleotide sequence ID" value="NZ_CP034244.1"/>
</dbReference>
<dbReference type="SMR" id="Q02PS6"/>
<dbReference type="KEGG" id="pau:PA14_23850"/>
<dbReference type="PseudoCAP" id="PA14_23850"/>
<dbReference type="HOGENOM" id="CLU_076364_2_0_6"/>
<dbReference type="BioCyc" id="PAER208963:G1G74-1989-MONOMER"/>
<dbReference type="UniPathway" id="UPA00035">
    <property type="reaction ID" value="UER00042"/>
</dbReference>
<dbReference type="Proteomes" id="UP000000653">
    <property type="component" value="Chromosome"/>
</dbReference>
<dbReference type="GO" id="GO:0004640">
    <property type="term" value="F:phosphoribosylanthranilate isomerase activity"/>
    <property type="evidence" value="ECO:0007669"/>
    <property type="project" value="UniProtKB-UniRule"/>
</dbReference>
<dbReference type="GO" id="GO:0000162">
    <property type="term" value="P:L-tryptophan biosynthetic process"/>
    <property type="evidence" value="ECO:0007669"/>
    <property type="project" value="UniProtKB-UniRule"/>
</dbReference>
<dbReference type="CDD" id="cd00405">
    <property type="entry name" value="PRAI"/>
    <property type="match status" value="1"/>
</dbReference>
<dbReference type="FunFam" id="3.20.20.70:FF:000075">
    <property type="entry name" value="Tryptophan biosynthesis protein TRP1"/>
    <property type="match status" value="1"/>
</dbReference>
<dbReference type="Gene3D" id="3.20.20.70">
    <property type="entry name" value="Aldolase class I"/>
    <property type="match status" value="1"/>
</dbReference>
<dbReference type="HAMAP" id="MF_00135">
    <property type="entry name" value="PRAI"/>
    <property type="match status" value="1"/>
</dbReference>
<dbReference type="InterPro" id="IPR013785">
    <property type="entry name" value="Aldolase_TIM"/>
</dbReference>
<dbReference type="InterPro" id="IPR001240">
    <property type="entry name" value="PRAI_dom"/>
</dbReference>
<dbReference type="InterPro" id="IPR011060">
    <property type="entry name" value="RibuloseP-bd_barrel"/>
</dbReference>
<dbReference type="InterPro" id="IPR044643">
    <property type="entry name" value="TrpF_fam"/>
</dbReference>
<dbReference type="NCBIfam" id="NF002298">
    <property type="entry name" value="PRK01222.1-4"/>
    <property type="match status" value="1"/>
</dbReference>
<dbReference type="NCBIfam" id="NF002299">
    <property type="entry name" value="PRK01222.1-6"/>
    <property type="match status" value="1"/>
</dbReference>
<dbReference type="PANTHER" id="PTHR42894">
    <property type="entry name" value="N-(5'-PHOSPHORIBOSYL)ANTHRANILATE ISOMERASE"/>
    <property type="match status" value="1"/>
</dbReference>
<dbReference type="PANTHER" id="PTHR42894:SF1">
    <property type="entry name" value="N-(5'-PHOSPHORIBOSYL)ANTHRANILATE ISOMERASE"/>
    <property type="match status" value="1"/>
</dbReference>
<dbReference type="Pfam" id="PF00697">
    <property type="entry name" value="PRAI"/>
    <property type="match status" value="1"/>
</dbReference>
<dbReference type="SUPFAM" id="SSF51366">
    <property type="entry name" value="Ribulose-phoshate binding barrel"/>
    <property type="match status" value="1"/>
</dbReference>
<name>TRPF_PSEAB</name>
<feature type="chain" id="PRO_1000018621" description="N-(5'-phosphoribosyl)anthranilate isomerase">
    <location>
        <begin position="1"/>
        <end position="211"/>
    </location>
</feature>
<evidence type="ECO:0000255" key="1">
    <source>
        <dbReference type="HAMAP-Rule" id="MF_00135"/>
    </source>
</evidence>